<reference key="1">
    <citation type="submission" date="2005-08" db="EMBL/GenBank/DDBJ databases">
        <title>Complete sequence of Synechococcus sp. CC9902.</title>
        <authorList>
            <person name="Copeland A."/>
            <person name="Lucas S."/>
            <person name="Lapidus A."/>
            <person name="Barry K."/>
            <person name="Detter J.C."/>
            <person name="Glavina T."/>
            <person name="Hammon N."/>
            <person name="Israni S."/>
            <person name="Pitluck S."/>
            <person name="Martinez M."/>
            <person name="Schmutz J."/>
            <person name="Larimer F."/>
            <person name="Land M."/>
            <person name="Kyrpides N."/>
            <person name="Ivanova N."/>
            <person name="Richardson P."/>
        </authorList>
    </citation>
    <scope>NUCLEOTIDE SEQUENCE [LARGE SCALE GENOMIC DNA]</scope>
    <source>
        <strain>CC9902</strain>
    </source>
</reference>
<accession>Q3AVZ9</accession>
<keyword id="KW-0472">Membrane</keyword>
<keyword id="KW-0520">NAD</keyword>
<keyword id="KW-0521">NADP</keyword>
<keyword id="KW-0618">Plastoquinone</keyword>
<keyword id="KW-0874">Quinone</keyword>
<keyword id="KW-1185">Reference proteome</keyword>
<keyword id="KW-0793">Thylakoid</keyword>
<keyword id="KW-1278">Translocase</keyword>
<keyword id="KW-0813">Transport</keyword>
<feature type="chain" id="PRO_0000371935" description="NAD(P)H-quinone oxidoreductase subunit H">
    <location>
        <begin position="1"/>
        <end position="394"/>
    </location>
</feature>
<name>NDHH_SYNS9</name>
<dbReference type="EC" id="7.1.1.-" evidence="1"/>
<dbReference type="EMBL" id="CP000097">
    <property type="protein sequence ID" value="ABB27070.1"/>
    <property type="molecule type" value="Genomic_DNA"/>
</dbReference>
<dbReference type="RefSeq" id="WP_011360854.1">
    <property type="nucleotide sequence ID" value="NC_007513.1"/>
</dbReference>
<dbReference type="SMR" id="Q3AVZ9"/>
<dbReference type="STRING" id="316279.Syncc9902_2112"/>
<dbReference type="KEGG" id="sye:Syncc9902_2112"/>
<dbReference type="eggNOG" id="COG0649">
    <property type="taxonomic scope" value="Bacteria"/>
</dbReference>
<dbReference type="HOGENOM" id="CLU_015134_1_2_3"/>
<dbReference type="OrthoDB" id="9801496at2"/>
<dbReference type="Proteomes" id="UP000002712">
    <property type="component" value="Chromosome"/>
</dbReference>
<dbReference type="GO" id="GO:0031676">
    <property type="term" value="C:plasma membrane-derived thylakoid membrane"/>
    <property type="evidence" value="ECO:0007669"/>
    <property type="project" value="UniProtKB-SubCell"/>
</dbReference>
<dbReference type="GO" id="GO:0051287">
    <property type="term" value="F:NAD binding"/>
    <property type="evidence" value="ECO:0007669"/>
    <property type="project" value="InterPro"/>
</dbReference>
<dbReference type="GO" id="GO:0016655">
    <property type="term" value="F:oxidoreductase activity, acting on NAD(P)H, quinone or similar compound as acceptor"/>
    <property type="evidence" value="ECO:0007669"/>
    <property type="project" value="UniProtKB-UniRule"/>
</dbReference>
<dbReference type="GO" id="GO:0048038">
    <property type="term" value="F:quinone binding"/>
    <property type="evidence" value="ECO:0007669"/>
    <property type="project" value="UniProtKB-KW"/>
</dbReference>
<dbReference type="GO" id="GO:0019684">
    <property type="term" value="P:photosynthesis, light reaction"/>
    <property type="evidence" value="ECO:0007669"/>
    <property type="project" value="UniProtKB-UniRule"/>
</dbReference>
<dbReference type="Gene3D" id="1.10.645.10">
    <property type="entry name" value="Cytochrome-c3 Hydrogenase, chain B"/>
    <property type="match status" value="1"/>
</dbReference>
<dbReference type="HAMAP" id="MF_01358">
    <property type="entry name" value="NDH1_NuoD"/>
    <property type="match status" value="1"/>
</dbReference>
<dbReference type="InterPro" id="IPR001135">
    <property type="entry name" value="NADH_Q_OxRdtase_suD"/>
</dbReference>
<dbReference type="InterPro" id="IPR014029">
    <property type="entry name" value="NADH_UbQ_OxRdtase_49kDa_CS"/>
</dbReference>
<dbReference type="InterPro" id="IPR022885">
    <property type="entry name" value="NDH1_su_D/H"/>
</dbReference>
<dbReference type="InterPro" id="IPR029014">
    <property type="entry name" value="NiFe-Hase_large"/>
</dbReference>
<dbReference type="NCBIfam" id="NF004739">
    <property type="entry name" value="PRK06075.1"/>
    <property type="match status" value="1"/>
</dbReference>
<dbReference type="NCBIfam" id="NF005649">
    <property type="entry name" value="PRK07415.1"/>
    <property type="match status" value="1"/>
</dbReference>
<dbReference type="PANTHER" id="PTHR11993:SF10">
    <property type="entry name" value="NADH DEHYDROGENASE [UBIQUINONE] IRON-SULFUR PROTEIN 2, MITOCHONDRIAL"/>
    <property type="match status" value="1"/>
</dbReference>
<dbReference type="PANTHER" id="PTHR11993">
    <property type="entry name" value="NADH-UBIQUINONE OXIDOREDUCTASE 49 KDA SUBUNIT"/>
    <property type="match status" value="1"/>
</dbReference>
<dbReference type="Pfam" id="PF00346">
    <property type="entry name" value="Complex1_49kDa"/>
    <property type="match status" value="1"/>
</dbReference>
<dbReference type="SUPFAM" id="SSF56762">
    <property type="entry name" value="HydB/Nqo4-like"/>
    <property type="match status" value="1"/>
</dbReference>
<dbReference type="PROSITE" id="PS00535">
    <property type="entry name" value="COMPLEX1_49K"/>
    <property type="match status" value="1"/>
</dbReference>
<gene>
    <name evidence="1" type="primary">ndhH</name>
    <name type="ordered locus">Syncc9902_2112</name>
</gene>
<evidence type="ECO:0000255" key="1">
    <source>
        <dbReference type="HAMAP-Rule" id="MF_01358"/>
    </source>
</evidence>
<sequence>MTQLETRTEPMVVNFGPHHPSMHGVLRLVVTLDGEDVVDCEPVIGYLHRGMEKIAENRTNVMFVPYVSRMDYAAGMFYEAVVVNAPEKLANIPVPKRASYIRVLMLELNRIANHLLWLGPFLADVGAQTPFFYIFREREMIYDLWEAATGQRLINNNYFRIGGVAADLPWGWLEKCRDFCDWFAPKIDEYEKLITNNPIFRRRIEGLGTIETKDAINWSLSGPMLRASGVPWDLRKVDHYECYDDFDWQVAWEKEGDCFARYRVRIEEMRQSLKILRQACDMIPGGPTENLEAKRLNEGKGSEAAGFDFQYVAKKVAPTFKIPNGELYTRLESGKGEIGVFLQGNNDVTPWRFKIRAADSNNLQILPHILKGHKVADIMAILGSIDVIMGSVDR</sequence>
<organism>
    <name type="scientific">Synechococcus sp. (strain CC9902)</name>
    <dbReference type="NCBI Taxonomy" id="316279"/>
    <lineage>
        <taxon>Bacteria</taxon>
        <taxon>Bacillati</taxon>
        <taxon>Cyanobacteriota</taxon>
        <taxon>Cyanophyceae</taxon>
        <taxon>Synechococcales</taxon>
        <taxon>Synechococcaceae</taxon>
        <taxon>Synechococcus</taxon>
    </lineage>
</organism>
<proteinExistence type="inferred from homology"/>
<comment type="function">
    <text evidence="1">NDH-1 shuttles electrons from an unknown electron donor, via FMN and iron-sulfur (Fe-S) centers, to quinones in the respiratory and/or the photosynthetic chain. The immediate electron acceptor for the enzyme in this species is believed to be plastoquinone. Couples the redox reaction to proton translocation, and thus conserves the redox energy in a proton gradient. Cyanobacterial NDH-1 also plays a role in inorganic carbon-concentration.</text>
</comment>
<comment type="catalytic activity">
    <reaction evidence="1">
        <text>a plastoquinone + NADH + (n+1) H(+)(in) = a plastoquinol + NAD(+) + n H(+)(out)</text>
        <dbReference type="Rhea" id="RHEA:42608"/>
        <dbReference type="Rhea" id="RHEA-COMP:9561"/>
        <dbReference type="Rhea" id="RHEA-COMP:9562"/>
        <dbReference type="ChEBI" id="CHEBI:15378"/>
        <dbReference type="ChEBI" id="CHEBI:17757"/>
        <dbReference type="ChEBI" id="CHEBI:57540"/>
        <dbReference type="ChEBI" id="CHEBI:57945"/>
        <dbReference type="ChEBI" id="CHEBI:62192"/>
    </reaction>
</comment>
<comment type="catalytic activity">
    <reaction evidence="1">
        <text>a plastoquinone + NADPH + (n+1) H(+)(in) = a plastoquinol + NADP(+) + n H(+)(out)</text>
        <dbReference type="Rhea" id="RHEA:42612"/>
        <dbReference type="Rhea" id="RHEA-COMP:9561"/>
        <dbReference type="Rhea" id="RHEA-COMP:9562"/>
        <dbReference type="ChEBI" id="CHEBI:15378"/>
        <dbReference type="ChEBI" id="CHEBI:17757"/>
        <dbReference type="ChEBI" id="CHEBI:57783"/>
        <dbReference type="ChEBI" id="CHEBI:58349"/>
        <dbReference type="ChEBI" id="CHEBI:62192"/>
    </reaction>
</comment>
<comment type="subunit">
    <text evidence="1">NDH-1 can be composed of about 15 different subunits; different subcomplexes with different compositions have been identified which probably have different functions.</text>
</comment>
<comment type="subcellular location">
    <subcellularLocation>
        <location evidence="1">Cellular thylakoid membrane</location>
        <topology evidence="1">Peripheral membrane protein</topology>
        <orientation evidence="1">Cytoplasmic side</orientation>
    </subcellularLocation>
</comment>
<comment type="similarity">
    <text evidence="1">Belongs to the complex I 49 kDa subunit family.</text>
</comment>
<protein>
    <recommendedName>
        <fullName evidence="1">NAD(P)H-quinone oxidoreductase subunit H</fullName>
        <ecNumber evidence="1">7.1.1.-</ecNumber>
    </recommendedName>
    <alternativeName>
        <fullName>NAD(P)H dehydrogenase subunit H</fullName>
    </alternativeName>
    <alternativeName>
        <fullName evidence="1">NADH-plastoquinone oxidoreductase subunit H</fullName>
    </alternativeName>
    <alternativeName>
        <fullName evidence="1">NDH-1 subunit H</fullName>
        <shortName evidence="1">NDH-H</shortName>
    </alternativeName>
</protein>